<protein>
    <recommendedName>
        <fullName evidence="1">Small ribosomal subunit protein bS18A</fullName>
    </recommendedName>
    <alternativeName>
        <fullName evidence="2">30S ribosomal protein S18 1</fullName>
    </alternativeName>
</protein>
<feature type="chain" id="PRO_0000111196" description="Small ribosomal subunit protein bS18A">
    <location>
        <begin position="1"/>
        <end position="83"/>
    </location>
</feature>
<evidence type="ECO:0000255" key="1">
    <source>
        <dbReference type="HAMAP-Rule" id="MF_00270"/>
    </source>
</evidence>
<evidence type="ECO:0000305" key="2"/>
<organism>
    <name type="scientific">Nocardia farcinica (strain IFM 10152)</name>
    <dbReference type="NCBI Taxonomy" id="247156"/>
    <lineage>
        <taxon>Bacteria</taxon>
        <taxon>Bacillati</taxon>
        <taxon>Actinomycetota</taxon>
        <taxon>Actinomycetes</taxon>
        <taxon>Mycobacteriales</taxon>
        <taxon>Nocardiaceae</taxon>
        <taxon>Nocardia</taxon>
    </lineage>
</organism>
<proteinExistence type="inferred from homology"/>
<name>RS181_NOCFA</name>
<accession>Q5YN15</accession>
<comment type="function">
    <text evidence="1">Binds as a heterodimer with protein bS6 to the central domain of the 16S rRNA, where it helps stabilize the platform of the 30S subunit.</text>
</comment>
<comment type="subunit">
    <text evidence="1">Part of the 30S ribosomal subunit. Forms a tight heterodimer with protein bS6.</text>
</comment>
<comment type="similarity">
    <text evidence="1">Belongs to the bacterial ribosomal protein bS18 family.</text>
</comment>
<keyword id="KW-1185">Reference proteome</keyword>
<keyword id="KW-0687">Ribonucleoprotein</keyword>
<keyword id="KW-0689">Ribosomal protein</keyword>
<keyword id="KW-0694">RNA-binding</keyword>
<keyword id="KW-0699">rRNA-binding</keyword>
<dbReference type="EMBL" id="AP006618">
    <property type="protein sequence ID" value="BAD60426.1"/>
    <property type="molecule type" value="Genomic_DNA"/>
</dbReference>
<dbReference type="RefSeq" id="WP_011212108.1">
    <property type="nucleotide sequence ID" value="NC_006361.1"/>
</dbReference>
<dbReference type="SMR" id="Q5YN15"/>
<dbReference type="STRING" id="247156.NFA_55740"/>
<dbReference type="GeneID" id="61136141"/>
<dbReference type="KEGG" id="nfa:NFA_55740"/>
<dbReference type="eggNOG" id="COG0238">
    <property type="taxonomic scope" value="Bacteria"/>
</dbReference>
<dbReference type="HOGENOM" id="CLU_148710_2_2_11"/>
<dbReference type="OrthoDB" id="9812008at2"/>
<dbReference type="Proteomes" id="UP000006820">
    <property type="component" value="Chromosome"/>
</dbReference>
<dbReference type="GO" id="GO:0022627">
    <property type="term" value="C:cytosolic small ribosomal subunit"/>
    <property type="evidence" value="ECO:0007669"/>
    <property type="project" value="TreeGrafter"/>
</dbReference>
<dbReference type="GO" id="GO:0070181">
    <property type="term" value="F:small ribosomal subunit rRNA binding"/>
    <property type="evidence" value="ECO:0007669"/>
    <property type="project" value="TreeGrafter"/>
</dbReference>
<dbReference type="GO" id="GO:0003735">
    <property type="term" value="F:structural constituent of ribosome"/>
    <property type="evidence" value="ECO:0007669"/>
    <property type="project" value="InterPro"/>
</dbReference>
<dbReference type="GO" id="GO:0006412">
    <property type="term" value="P:translation"/>
    <property type="evidence" value="ECO:0007669"/>
    <property type="project" value="UniProtKB-UniRule"/>
</dbReference>
<dbReference type="FunFam" id="4.10.640.10:FF:000004">
    <property type="entry name" value="30S ribosomal protein S18"/>
    <property type="match status" value="1"/>
</dbReference>
<dbReference type="Gene3D" id="4.10.640.10">
    <property type="entry name" value="Ribosomal protein S18"/>
    <property type="match status" value="1"/>
</dbReference>
<dbReference type="HAMAP" id="MF_00270">
    <property type="entry name" value="Ribosomal_bS18"/>
    <property type="match status" value="1"/>
</dbReference>
<dbReference type="InterPro" id="IPR001648">
    <property type="entry name" value="Ribosomal_bS18"/>
</dbReference>
<dbReference type="InterPro" id="IPR018275">
    <property type="entry name" value="Ribosomal_bS18_CS"/>
</dbReference>
<dbReference type="InterPro" id="IPR036870">
    <property type="entry name" value="Ribosomal_bS18_sf"/>
</dbReference>
<dbReference type="NCBIfam" id="TIGR00165">
    <property type="entry name" value="S18"/>
    <property type="match status" value="1"/>
</dbReference>
<dbReference type="PANTHER" id="PTHR13479">
    <property type="entry name" value="30S RIBOSOMAL PROTEIN S18"/>
    <property type="match status" value="1"/>
</dbReference>
<dbReference type="PANTHER" id="PTHR13479:SF62">
    <property type="entry name" value="SMALL RIBOSOMAL SUBUNIT PROTEIN BS18A"/>
    <property type="match status" value="1"/>
</dbReference>
<dbReference type="Pfam" id="PF01084">
    <property type="entry name" value="Ribosomal_S18"/>
    <property type="match status" value="1"/>
</dbReference>
<dbReference type="PRINTS" id="PR00974">
    <property type="entry name" value="RIBOSOMALS18"/>
</dbReference>
<dbReference type="SUPFAM" id="SSF46911">
    <property type="entry name" value="Ribosomal protein S18"/>
    <property type="match status" value="1"/>
</dbReference>
<dbReference type="PROSITE" id="PS00057">
    <property type="entry name" value="RIBOSOMAL_S18"/>
    <property type="match status" value="1"/>
</dbReference>
<sequence length="83" mass="9351">MPKAPAREKVLKKKACTFCKESKSGNVSIDYKDTTLLRKYVSDRGKIRARRVTGNCVQHQRDIAVAVKNSREVALLPYVSTAR</sequence>
<gene>
    <name evidence="1" type="primary">rpsR1</name>
    <name type="synonym">rpsR</name>
    <name type="ordered locus">NFA_55740</name>
</gene>
<reference key="1">
    <citation type="journal article" date="2004" name="Proc. Natl. Acad. Sci. U.S.A.">
        <title>The complete genomic sequence of Nocardia farcinica IFM 10152.</title>
        <authorList>
            <person name="Ishikawa J."/>
            <person name="Yamashita A."/>
            <person name="Mikami Y."/>
            <person name="Hoshino Y."/>
            <person name="Kurita H."/>
            <person name="Hotta K."/>
            <person name="Shiba T."/>
            <person name="Hattori M."/>
        </authorList>
    </citation>
    <scope>NUCLEOTIDE SEQUENCE [LARGE SCALE GENOMIC DNA]</scope>
    <source>
        <strain>IFM 10152</strain>
    </source>
</reference>